<dbReference type="EMBL" id="M60921">
    <property type="protein sequence ID" value="AAB49567.1"/>
    <property type="molecule type" value="mRNA"/>
</dbReference>
<dbReference type="EMBL" id="BC072493">
    <property type="protein sequence ID" value="AAH72493.1"/>
    <property type="molecule type" value="mRNA"/>
</dbReference>
<dbReference type="PIR" id="A40443">
    <property type="entry name" value="A40443"/>
</dbReference>
<dbReference type="RefSeq" id="NP_058955.1">
    <property type="nucleotide sequence ID" value="NM_017259.2"/>
</dbReference>
<dbReference type="SMR" id="P27049"/>
<dbReference type="BioGRID" id="248245">
    <property type="interactions" value="3"/>
</dbReference>
<dbReference type="FunCoup" id="P27049">
    <property type="interactions" value="69"/>
</dbReference>
<dbReference type="IntAct" id="P27049">
    <property type="interactions" value="2"/>
</dbReference>
<dbReference type="STRING" id="10116.ENSRNOP00000004408"/>
<dbReference type="PhosphoSitePlus" id="P27049"/>
<dbReference type="PaxDb" id="10116-ENSRNOP00000004408"/>
<dbReference type="Ensembl" id="ENSRNOT00000004408.4">
    <property type="protein sequence ID" value="ENSRNOP00000004408.1"/>
    <property type="gene ID" value="ENSRNOG00000003300.4"/>
</dbReference>
<dbReference type="GeneID" id="29619"/>
<dbReference type="KEGG" id="rno:29619"/>
<dbReference type="UCSC" id="RGD:2225">
    <property type="organism name" value="rat"/>
</dbReference>
<dbReference type="AGR" id="RGD:2225"/>
<dbReference type="CTD" id="7832"/>
<dbReference type="RGD" id="2225">
    <property type="gene designation" value="Btg2"/>
</dbReference>
<dbReference type="eggNOG" id="KOG4006">
    <property type="taxonomic scope" value="Eukaryota"/>
</dbReference>
<dbReference type="GeneTree" id="ENSGT00950000182952"/>
<dbReference type="HOGENOM" id="CLU_079660_4_0_1"/>
<dbReference type="InParanoid" id="P27049"/>
<dbReference type="OMA" id="CKNQIML"/>
<dbReference type="OrthoDB" id="19928at2759"/>
<dbReference type="PhylomeDB" id="P27049"/>
<dbReference type="TreeFam" id="TF105272"/>
<dbReference type="Reactome" id="R-RNO-6804115">
    <property type="pathway name" value="TP53 regulates transcription of additional cell cycle genes whose exact role in the p53 pathway remain uncertain"/>
</dbReference>
<dbReference type="PRO" id="PR:P27049"/>
<dbReference type="Proteomes" id="UP000002494">
    <property type="component" value="Chromosome 13"/>
</dbReference>
<dbReference type="Bgee" id="ENSRNOG00000003300">
    <property type="expression patterns" value="Expressed in thymus and 20 other cell types or tissues"/>
</dbReference>
<dbReference type="GO" id="GO:0005737">
    <property type="term" value="C:cytoplasm"/>
    <property type="evidence" value="ECO:0000318"/>
    <property type="project" value="GO_Central"/>
</dbReference>
<dbReference type="GO" id="GO:0005634">
    <property type="term" value="C:nucleus"/>
    <property type="evidence" value="ECO:0000318"/>
    <property type="project" value="GO_Central"/>
</dbReference>
<dbReference type="GO" id="GO:0003714">
    <property type="term" value="F:transcription corepressor activity"/>
    <property type="evidence" value="ECO:0000314"/>
    <property type="project" value="MGI"/>
</dbReference>
<dbReference type="GO" id="GO:0009952">
    <property type="term" value="P:anterior/posterior pattern specification"/>
    <property type="evidence" value="ECO:0000266"/>
    <property type="project" value="RGD"/>
</dbReference>
<dbReference type="GO" id="GO:0008306">
    <property type="term" value="P:associative learning"/>
    <property type="evidence" value="ECO:0000266"/>
    <property type="project" value="RGD"/>
</dbReference>
<dbReference type="GO" id="GO:1904628">
    <property type="term" value="P:cellular response to phorbol 13-acetate 12-myristate"/>
    <property type="evidence" value="ECO:0000270"/>
    <property type="project" value="RGD"/>
</dbReference>
<dbReference type="GO" id="GO:0021954">
    <property type="term" value="P:central nervous system neuron development"/>
    <property type="evidence" value="ECO:0000266"/>
    <property type="project" value="RGD"/>
</dbReference>
<dbReference type="GO" id="GO:0021542">
    <property type="term" value="P:dentate gyrus development"/>
    <property type="evidence" value="ECO:0000266"/>
    <property type="project" value="RGD"/>
</dbReference>
<dbReference type="GO" id="GO:0006974">
    <property type="term" value="P:DNA damage response"/>
    <property type="evidence" value="ECO:0000266"/>
    <property type="project" value="RGD"/>
</dbReference>
<dbReference type="GO" id="GO:0043066">
    <property type="term" value="P:negative regulation of apoptotic process"/>
    <property type="evidence" value="ECO:0000314"/>
    <property type="project" value="MGI"/>
</dbReference>
<dbReference type="GO" id="GO:0008285">
    <property type="term" value="P:negative regulation of cell population proliferation"/>
    <property type="evidence" value="ECO:0000250"/>
    <property type="project" value="UniProtKB"/>
</dbReference>
<dbReference type="GO" id="GO:0007406">
    <property type="term" value="P:negative regulation of neuroblast proliferation"/>
    <property type="evidence" value="ECO:0000266"/>
    <property type="project" value="RGD"/>
</dbReference>
<dbReference type="GO" id="GO:0043524">
    <property type="term" value="P:negative regulation of neuron apoptotic process"/>
    <property type="evidence" value="ECO:0000315"/>
    <property type="project" value="RGD"/>
</dbReference>
<dbReference type="GO" id="GO:0000122">
    <property type="term" value="P:negative regulation of transcription by RNA polymerase II"/>
    <property type="evidence" value="ECO:0000314"/>
    <property type="project" value="MGI"/>
</dbReference>
<dbReference type="GO" id="GO:0017148">
    <property type="term" value="P:negative regulation of translation"/>
    <property type="evidence" value="ECO:0000250"/>
    <property type="project" value="UniProtKB"/>
</dbReference>
<dbReference type="GO" id="GO:0061351">
    <property type="term" value="P:neural precursor cell proliferation"/>
    <property type="evidence" value="ECO:0000266"/>
    <property type="project" value="RGD"/>
</dbReference>
<dbReference type="GO" id="GO:0007405">
    <property type="term" value="P:neuroblast proliferation"/>
    <property type="evidence" value="ECO:0000266"/>
    <property type="project" value="RGD"/>
</dbReference>
<dbReference type="GO" id="GO:0030182">
    <property type="term" value="P:neuron differentiation"/>
    <property type="evidence" value="ECO:0000314"/>
    <property type="project" value="MGI"/>
</dbReference>
<dbReference type="GO" id="GO:0031175">
    <property type="term" value="P:neuron projection development"/>
    <property type="evidence" value="ECO:0000266"/>
    <property type="project" value="RGD"/>
</dbReference>
<dbReference type="GO" id="GO:0060213">
    <property type="term" value="P:positive regulation of nuclear-transcribed mRNA poly(A) tail shortening"/>
    <property type="evidence" value="ECO:0000266"/>
    <property type="project" value="RGD"/>
</dbReference>
<dbReference type="GO" id="GO:0051602">
    <property type="term" value="P:response to electrical stimulus"/>
    <property type="evidence" value="ECO:0000270"/>
    <property type="project" value="RGD"/>
</dbReference>
<dbReference type="GO" id="GO:0009612">
    <property type="term" value="P:response to mechanical stimulus"/>
    <property type="evidence" value="ECO:0000270"/>
    <property type="project" value="RGD"/>
</dbReference>
<dbReference type="GO" id="GO:0043434">
    <property type="term" value="P:response to peptide hormone"/>
    <property type="evidence" value="ECO:0000270"/>
    <property type="project" value="RGD"/>
</dbReference>
<dbReference type="GO" id="GO:0035914">
    <property type="term" value="P:skeletal muscle cell differentiation"/>
    <property type="evidence" value="ECO:0000266"/>
    <property type="project" value="RGD"/>
</dbReference>
<dbReference type="FunFam" id="3.90.640.90:FF:000003">
    <property type="entry name" value="BTG1 isoform 1"/>
    <property type="match status" value="1"/>
</dbReference>
<dbReference type="Gene3D" id="3.90.640.90">
    <property type="entry name" value="Anti-proliferative protein, N-terminal domain"/>
    <property type="match status" value="1"/>
</dbReference>
<dbReference type="InterPro" id="IPR002087">
    <property type="entry name" value="Anti_prolifrtn"/>
</dbReference>
<dbReference type="InterPro" id="IPR033332">
    <property type="entry name" value="BTG"/>
</dbReference>
<dbReference type="InterPro" id="IPR036054">
    <property type="entry name" value="BTG-like_sf"/>
</dbReference>
<dbReference type="PANTHER" id="PTHR22978">
    <property type="entry name" value="B-CELL TRANSLOCATION GENE"/>
    <property type="match status" value="1"/>
</dbReference>
<dbReference type="PANTHER" id="PTHR22978:SF29">
    <property type="entry name" value="PROTEIN BTG2"/>
    <property type="match status" value="1"/>
</dbReference>
<dbReference type="Pfam" id="PF07742">
    <property type="entry name" value="BTG"/>
    <property type="match status" value="1"/>
</dbReference>
<dbReference type="PRINTS" id="PR00310">
    <property type="entry name" value="ANTIPRLFBTG1"/>
</dbReference>
<dbReference type="SMART" id="SM00099">
    <property type="entry name" value="btg1"/>
    <property type="match status" value="1"/>
</dbReference>
<dbReference type="SUPFAM" id="SSF160696">
    <property type="entry name" value="BTG domain-like"/>
    <property type="match status" value="1"/>
</dbReference>
<dbReference type="PROSITE" id="PS00960">
    <property type="entry name" value="BTG_1"/>
    <property type="match status" value="1"/>
</dbReference>
<dbReference type="PROSITE" id="PS01203">
    <property type="entry name" value="BTG_2"/>
    <property type="match status" value="1"/>
</dbReference>
<proteinExistence type="evidence at protein level"/>
<keyword id="KW-0597">Phosphoprotein</keyword>
<keyword id="KW-1185">Reference proteome</keyword>
<keyword id="KW-0804">Transcription</keyword>
<keyword id="KW-0805">Transcription regulation</keyword>
<feature type="chain" id="PRO_0000143806" description="Protein BTG2">
    <location>
        <begin position="1"/>
        <end position="158"/>
    </location>
</feature>
<feature type="modified residue" description="Phosphoserine; by MAPK1 and MAPK3" evidence="2">
    <location>
        <position position="147"/>
    </location>
</feature>
<feature type="modified residue" description="Phosphoserine; by MAPK14" evidence="2">
    <location>
        <position position="149"/>
    </location>
</feature>
<organism>
    <name type="scientific">Rattus norvegicus</name>
    <name type="common">Rat</name>
    <dbReference type="NCBI Taxonomy" id="10116"/>
    <lineage>
        <taxon>Eukaryota</taxon>
        <taxon>Metazoa</taxon>
        <taxon>Chordata</taxon>
        <taxon>Craniata</taxon>
        <taxon>Vertebrata</taxon>
        <taxon>Euteleostomi</taxon>
        <taxon>Mammalia</taxon>
        <taxon>Eutheria</taxon>
        <taxon>Euarchontoglires</taxon>
        <taxon>Glires</taxon>
        <taxon>Rodentia</taxon>
        <taxon>Myomorpha</taxon>
        <taxon>Muroidea</taxon>
        <taxon>Muridae</taxon>
        <taxon>Murinae</taxon>
        <taxon>Rattus</taxon>
    </lineage>
</organism>
<reference key="1">
    <citation type="journal article" date="1991" name="Proc. Natl. Acad. Sci. U.S.A.">
        <title>Molecular cloning of PC3, a putatively secreted protein whose mRNA is induced by nerve growth factor and depolarization.</title>
        <authorList>
            <person name="Bradbury A."/>
            <person name="Possenti R."/>
            <person name="Shooter E.M."/>
            <person name="Tirone F."/>
        </authorList>
    </citation>
    <scope>NUCLEOTIDE SEQUENCE [MRNA]</scope>
</reference>
<reference key="2">
    <citation type="journal article" date="2004" name="Genome Res.">
        <title>The status, quality, and expansion of the NIH full-length cDNA project: the Mammalian Gene Collection (MGC).</title>
        <authorList>
            <consortium name="The MGC Project Team"/>
        </authorList>
    </citation>
    <scope>NUCLEOTIDE SEQUENCE [LARGE SCALE MRNA]</scope>
    <source>
        <tissue>Lung</tissue>
    </source>
</reference>
<reference key="3">
    <citation type="journal article" date="1994" name="Mech. Dev.">
        <title>Developmental expression of PC3 gene is correlated with neuronal cell birthday.</title>
        <authorList>
            <person name="Iacopetti P."/>
            <person name="Barsacchi G."/>
            <person name="Tirone F."/>
            <person name="Maffei L."/>
            <person name="Cremisi F."/>
        </authorList>
    </citation>
    <scope>CHARACTERIZATION</scope>
</reference>
<reference key="4">
    <citation type="journal article" date="1996" name="Cell Growth Differ.">
        <title>Overexpression of the nerve growth factor-inducible PC3 immediate early gene is associated with growth inhibition.</title>
        <authorList>
            <person name="Montagnoli A."/>
            <person name="Guardavaccaro D."/>
            <person name="Starace G."/>
            <person name="Tirone F."/>
        </authorList>
    </citation>
    <scope>CHARACTERIZATION</scope>
</reference>
<reference key="5">
    <citation type="journal article" date="2001" name="Biochem. J.">
        <title>Mitogen-stimulated TIS21 protein interacts with a protein-kinase-Calpha-binding protein rPICK1.</title>
        <authorList>
            <person name="Lin W.-J."/>
            <person name="Chang Y.-F."/>
            <person name="Wang W.-L."/>
            <person name="Huang C.-Y.F."/>
        </authorList>
    </citation>
    <scope>INTERACTION WITH PRKCABP</scope>
</reference>
<name>BTG2_RAT</name>
<sequence>MSHGKRTDMLPEIAAAVGFLTSLLRTRGCVSEQRLKVFSRALQDALTDHYKHHWFPEKPSKGSGYRCIRINHKMDPIISKVASQIGLSQPQLHQLLPSELTLWVDPYEVSYRIGEDGSICVLYEEAPVATSYGLLTCKNQMMLGRSSPSKNYVMTVSS</sequence>
<evidence type="ECO:0000250" key="1"/>
<evidence type="ECO:0000250" key="2">
    <source>
        <dbReference type="UniProtKB" id="P78543"/>
    </source>
</evidence>
<evidence type="ECO:0000269" key="3">
    <source>
    </source>
</evidence>
<evidence type="ECO:0000305" key="4"/>
<gene>
    <name type="primary">Btg2</name>
    <name type="synonym">Pc3</name>
</gene>
<protein>
    <recommendedName>
        <fullName>Protein BTG2</fullName>
    </recommendedName>
    <alternativeName>
        <fullName>BTG family member 2</fullName>
    </alternativeName>
    <alternativeName>
        <fullName>NGF-inducible anti-proliferative protein PC3</fullName>
    </alternativeName>
</protein>
<accession>P27049</accession>
<comment type="function">
    <text evidence="1">Anti-proliferative protein; the function is mediated by association with deadenylase subunits of the CCR4-NOT complex. Activates mRNA deadenylation in a CNOT6 and CNOT7-dependent manner. In vitro can inhibit deadenylase activity of CNOT7 and CNOT8. Involved in cell cycle regulation. Could be involved in the growth arrest and differentiation of the neuronal precursors. Modulates transcription regulation mediated by ESR1. Involved in mitochondrial depolarization and neurite outgrowth (By similarity).</text>
</comment>
<comment type="subunit">
    <text evidence="3">Interacts with PRKCABP. Interacts with CNOT7 and CNOT8; indicative for an association with the CCR4-NOT complex. Interacts with PIN1, inducing mitochondrial depolarization.</text>
</comment>
<comment type="interaction">
    <interactant intactId="EBI-78953">
        <id>P27049</id>
    </interactant>
    <interactant intactId="EBI-77728">
        <id>Q9EP80</id>
        <label>Pick1</label>
    </interactant>
    <organismsDiffer>false</organismsDiffer>
    <experiments>3</experiments>
</comment>
<comment type="tissue specificity">
    <text>In brain at embryonic day 13.5, placenta, amnion, and spleen, which are proliferating and/or differentiating.</text>
</comment>
<comment type="induction">
    <text>By nerve growth factor. At lower levels by epidermal growth factor and membrane depolarization. At much lower levels by fibroblast growth factor and interleukin 6.</text>
</comment>
<comment type="PTM">
    <text evidence="1">Phosphorylated at Ser-147 by MAPK1/ERK2 and MAPK3/ERK1, and at Ser-149 by MAPK14, leading to PIN1-binding and mitochondrial depolarization.</text>
</comment>
<comment type="similarity">
    <text evidence="4">Belongs to the BTG family.</text>
</comment>